<dbReference type="EC" id="2.5.1.75" evidence="1"/>
<dbReference type="EMBL" id="AE009442">
    <property type="protein sequence ID" value="AAO27967.1"/>
    <property type="molecule type" value="Genomic_DNA"/>
</dbReference>
<dbReference type="RefSeq" id="WP_004087674.1">
    <property type="nucleotide sequence ID" value="NC_004556.1"/>
</dbReference>
<dbReference type="SMR" id="Q87F70"/>
<dbReference type="GeneID" id="93903759"/>
<dbReference type="KEGG" id="xft:PD_0067"/>
<dbReference type="HOGENOM" id="CLU_032616_0_0_6"/>
<dbReference type="Proteomes" id="UP000002516">
    <property type="component" value="Chromosome"/>
</dbReference>
<dbReference type="GO" id="GO:0005524">
    <property type="term" value="F:ATP binding"/>
    <property type="evidence" value="ECO:0007669"/>
    <property type="project" value="UniProtKB-UniRule"/>
</dbReference>
<dbReference type="GO" id="GO:0052381">
    <property type="term" value="F:tRNA dimethylallyltransferase activity"/>
    <property type="evidence" value="ECO:0007669"/>
    <property type="project" value="UniProtKB-UniRule"/>
</dbReference>
<dbReference type="GO" id="GO:0006400">
    <property type="term" value="P:tRNA modification"/>
    <property type="evidence" value="ECO:0007669"/>
    <property type="project" value="TreeGrafter"/>
</dbReference>
<dbReference type="FunFam" id="1.10.20.140:FF:000001">
    <property type="entry name" value="tRNA dimethylallyltransferase"/>
    <property type="match status" value="1"/>
</dbReference>
<dbReference type="Gene3D" id="1.10.20.140">
    <property type="match status" value="1"/>
</dbReference>
<dbReference type="Gene3D" id="3.40.50.300">
    <property type="entry name" value="P-loop containing nucleotide triphosphate hydrolases"/>
    <property type="match status" value="1"/>
</dbReference>
<dbReference type="HAMAP" id="MF_00185">
    <property type="entry name" value="IPP_trans"/>
    <property type="match status" value="1"/>
</dbReference>
<dbReference type="InterPro" id="IPR039657">
    <property type="entry name" value="Dimethylallyltransferase"/>
</dbReference>
<dbReference type="InterPro" id="IPR018022">
    <property type="entry name" value="IPT"/>
</dbReference>
<dbReference type="InterPro" id="IPR027417">
    <property type="entry name" value="P-loop_NTPase"/>
</dbReference>
<dbReference type="NCBIfam" id="TIGR00174">
    <property type="entry name" value="miaA"/>
    <property type="match status" value="1"/>
</dbReference>
<dbReference type="PANTHER" id="PTHR11088">
    <property type="entry name" value="TRNA DIMETHYLALLYLTRANSFERASE"/>
    <property type="match status" value="1"/>
</dbReference>
<dbReference type="PANTHER" id="PTHR11088:SF60">
    <property type="entry name" value="TRNA DIMETHYLALLYLTRANSFERASE"/>
    <property type="match status" value="1"/>
</dbReference>
<dbReference type="Pfam" id="PF01715">
    <property type="entry name" value="IPPT"/>
    <property type="match status" value="1"/>
</dbReference>
<dbReference type="SUPFAM" id="SSF52540">
    <property type="entry name" value="P-loop containing nucleoside triphosphate hydrolases"/>
    <property type="match status" value="1"/>
</dbReference>
<feature type="chain" id="PRO_0000164010" description="tRNA dimethylallyltransferase">
    <location>
        <begin position="1"/>
        <end position="317"/>
    </location>
</feature>
<feature type="region of interest" description="Interaction with substrate tRNA" evidence="1">
    <location>
        <begin position="39"/>
        <end position="42"/>
    </location>
</feature>
<feature type="region of interest" description="Interaction with substrate tRNA" evidence="1">
    <location>
        <begin position="163"/>
        <end position="167"/>
    </location>
</feature>
<feature type="binding site" evidence="1">
    <location>
        <begin position="14"/>
        <end position="21"/>
    </location>
    <ligand>
        <name>ATP</name>
        <dbReference type="ChEBI" id="CHEBI:30616"/>
    </ligand>
</feature>
<feature type="binding site" evidence="1">
    <location>
        <begin position="16"/>
        <end position="21"/>
    </location>
    <ligand>
        <name>substrate</name>
    </ligand>
</feature>
<feature type="site" description="Interaction with substrate tRNA" evidence="1">
    <location>
        <position position="105"/>
    </location>
</feature>
<feature type="site" description="Interaction with substrate tRNA" evidence="1">
    <location>
        <position position="127"/>
    </location>
</feature>
<protein>
    <recommendedName>
        <fullName evidence="1">tRNA dimethylallyltransferase</fullName>
        <ecNumber evidence="1">2.5.1.75</ecNumber>
    </recommendedName>
    <alternativeName>
        <fullName evidence="1">Dimethylallyl diphosphate:tRNA dimethylallyltransferase</fullName>
        <shortName evidence="1">DMAPP:tRNA dimethylallyltransferase</shortName>
        <shortName evidence="1">DMATase</shortName>
    </alternativeName>
    <alternativeName>
        <fullName evidence="1">Isopentenyl-diphosphate:tRNA isopentenyltransferase</fullName>
        <shortName evidence="1">IPP transferase</shortName>
        <shortName evidence="1">IPPT</shortName>
        <shortName evidence="1">IPTase</shortName>
    </alternativeName>
</protein>
<gene>
    <name evidence="1" type="primary">miaA</name>
    <name type="ordered locus">PD_0067</name>
</gene>
<comment type="function">
    <text evidence="1">Catalyzes the transfer of a dimethylallyl group onto the adenine at position 37 in tRNAs that read codons beginning with uridine, leading to the formation of N6-(dimethylallyl)adenosine (i(6)A).</text>
</comment>
<comment type="catalytic activity">
    <reaction evidence="1">
        <text>adenosine(37) in tRNA + dimethylallyl diphosphate = N(6)-dimethylallyladenosine(37) in tRNA + diphosphate</text>
        <dbReference type="Rhea" id="RHEA:26482"/>
        <dbReference type="Rhea" id="RHEA-COMP:10162"/>
        <dbReference type="Rhea" id="RHEA-COMP:10375"/>
        <dbReference type="ChEBI" id="CHEBI:33019"/>
        <dbReference type="ChEBI" id="CHEBI:57623"/>
        <dbReference type="ChEBI" id="CHEBI:74411"/>
        <dbReference type="ChEBI" id="CHEBI:74415"/>
        <dbReference type="EC" id="2.5.1.75"/>
    </reaction>
</comment>
<comment type="cofactor">
    <cofactor evidence="1">
        <name>Mg(2+)</name>
        <dbReference type="ChEBI" id="CHEBI:18420"/>
    </cofactor>
</comment>
<comment type="subunit">
    <text evidence="1">Monomer.</text>
</comment>
<comment type="similarity">
    <text evidence="1">Belongs to the IPP transferase family.</text>
</comment>
<accession>Q87F70</accession>
<name>MIAA_XYLFT</name>
<keyword id="KW-0067">ATP-binding</keyword>
<keyword id="KW-0460">Magnesium</keyword>
<keyword id="KW-0547">Nucleotide-binding</keyword>
<keyword id="KW-1185">Reference proteome</keyword>
<keyword id="KW-0808">Transferase</keyword>
<keyword id="KW-0819">tRNA processing</keyword>
<proteinExistence type="inferred from homology"/>
<reference key="1">
    <citation type="journal article" date="2003" name="J. Bacteriol.">
        <title>Comparative analyses of the complete genome sequences of Pierce's disease and citrus variegated chlorosis strains of Xylella fastidiosa.</title>
        <authorList>
            <person name="Van Sluys M.A."/>
            <person name="de Oliveira M.C."/>
            <person name="Monteiro-Vitorello C.B."/>
            <person name="Miyaki C.Y."/>
            <person name="Furlan L.R."/>
            <person name="Camargo L.E.A."/>
            <person name="da Silva A.C.R."/>
            <person name="Moon D.H."/>
            <person name="Takita M.A."/>
            <person name="Lemos E.G.M."/>
            <person name="Machado M.A."/>
            <person name="Ferro M.I.T."/>
            <person name="da Silva F.R."/>
            <person name="Goldman M.H.S."/>
            <person name="Goldman G.H."/>
            <person name="Lemos M.V.F."/>
            <person name="El-Dorry H."/>
            <person name="Tsai S.M."/>
            <person name="Carrer H."/>
            <person name="Carraro D.M."/>
            <person name="de Oliveira R.C."/>
            <person name="Nunes L.R."/>
            <person name="Siqueira W.J."/>
            <person name="Coutinho L.L."/>
            <person name="Kimura E.T."/>
            <person name="Ferro E.S."/>
            <person name="Harakava R."/>
            <person name="Kuramae E.E."/>
            <person name="Marino C.L."/>
            <person name="Giglioti E."/>
            <person name="Abreu I.L."/>
            <person name="Alves L.M.C."/>
            <person name="do Amaral A.M."/>
            <person name="Baia G.S."/>
            <person name="Blanco S.R."/>
            <person name="Brito M.S."/>
            <person name="Cannavan F.S."/>
            <person name="Celestino A.V."/>
            <person name="da Cunha A.F."/>
            <person name="Fenille R.C."/>
            <person name="Ferro J.A."/>
            <person name="Formighieri E.F."/>
            <person name="Kishi L.T."/>
            <person name="Leoni S.G."/>
            <person name="Oliveira A.R."/>
            <person name="Rosa V.E. Jr."/>
            <person name="Sassaki F.T."/>
            <person name="Sena J.A.D."/>
            <person name="de Souza A.A."/>
            <person name="Truffi D."/>
            <person name="Tsukumo F."/>
            <person name="Yanai G.M."/>
            <person name="Zaros L.G."/>
            <person name="Civerolo E.L."/>
            <person name="Simpson A.J.G."/>
            <person name="Almeida N.F. Jr."/>
            <person name="Setubal J.C."/>
            <person name="Kitajima J.P."/>
        </authorList>
    </citation>
    <scope>NUCLEOTIDE SEQUENCE [LARGE SCALE GENOMIC DNA]</scope>
    <source>
        <strain>Temecula1 / ATCC 700964</strain>
    </source>
</reference>
<evidence type="ECO:0000255" key="1">
    <source>
        <dbReference type="HAMAP-Rule" id="MF_00185"/>
    </source>
</evidence>
<organism>
    <name type="scientific">Xylella fastidiosa (strain Temecula1 / ATCC 700964)</name>
    <dbReference type="NCBI Taxonomy" id="183190"/>
    <lineage>
        <taxon>Bacteria</taxon>
        <taxon>Pseudomonadati</taxon>
        <taxon>Pseudomonadota</taxon>
        <taxon>Gammaproteobacteria</taxon>
        <taxon>Lysobacterales</taxon>
        <taxon>Lysobacteraceae</taxon>
        <taxon>Xylella</taxon>
    </lineage>
</organism>
<sequence>MPADTRPAAIVLMGPTASGKSQLAIDIAKRWGGEVISVDSVLVYRGLDIGTAKPNAAMRASVPHHLIDICEPWETYSAADFAHDARAAIDMIVRRGALPILTGGTGLYFRALLAGLSDMPPAHPEIRAMIAAEAKRDSWAALHTRLAEVDAITAARIHATDPQRIQRALEVYLVSGQSMSDWQNQPPKQRLPLRVLKLVLAPTHRKVLHFRIAQRFKAMLDNGLLAEVNALRTHPSIHAMARPLDLPAMRAVGYRQCWEHLDGMYTAEMLYQRSVAATRQLAKRQLTWLRGELDALWFDPEHDQSRIEKVMEAFLNR</sequence>